<organism>
    <name type="scientific">Helicobacter acinonychis (strain Sheeba)</name>
    <dbReference type="NCBI Taxonomy" id="382638"/>
    <lineage>
        <taxon>Bacteria</taxon>
        <taxon>Pseudomonadati</taxon>
        <taxon>Campylobacterota</taxon>
        <taxon>Epsilonproteobacteria</taxon>
        <taxon>Campylobacterales</taxon>
        <taxon>Helicobacteraceae</taxon>
        <taxon>Helicobacter</taxon>
    </lineage>
</organism>
<gene>
    <name evidence="1" type="primary">glyQ</name>
    <name type="ordered locus">Hac_1036</name>
</gene>
<keyword id="KW-0030">Aminoacyl-tRNA synthetase</keyword>
<keyword id="KW-0067">ATP-binding</keyword>
<keyword id="KW-0963">Cytoplasm</keyword>
<keyword id="KW-0436">Ligase</keyword>
<keyword id="KW-0547">Nucleotide-binding</keyword>
<keyword id="KW-0648">Protein biosynthesis</keyword>
<evidence type="ECO:0000255" key="1">
    <source>
        <dbReference type="HAMAP-Rule" id="MF_00254"/>
    </source>
</evidence>
<reference key="1">
    <citation type="journal article" date="2006" name="PLoS Genet.">
        <title>Who ate whom? Adaptive Helicobacter genomic changes that accompanied a host jump from early humans to large felines.</title>
        <authorList>
            <person name="Eppinger M."/>
            <person name="Baar C."/>
            <person name="Linz B."/>
            <person name="Raddatz G."/>
            <person name="Lanz C."/>
            <person name="Keller H."/>
            <person name="Morelli G."/>
            <person name="Gressmann H."/>
            <person name="Achtman M."/>
            <person name="Schuster S.C."/>
        </authorList>
    </citation>
    <scope>NUCLEOTIDE SEQUENCE [LARGE SCALE GENOMIC DNA]</scope>
    <source>
        <strain>Sheeba</strain>
    </source>
</reference>
<proteinExistence type="inferred from homology"/>
<dbReference type="EC" id="6.1.1.14" evidence="1"/>
<dbReference type="EMBL" id="AM260522">
    <property type="protein sequence ID" value="CAJ99800.1"/>
    <property type="molecule type" value="Genomic_DNA"/>
</dbReference>
<dbReference type="RefSeq" id="WP_011577910.1">
    <property type="nucleotide sequence ID" value="NC_008229.1"/>
</dbReference>
<dbReference type="SMR" id="Q17X26"/>
<dbReference type="STRING" id="382638.Hac_1036"/>
<dbReference type="GeneID" id="31758409"/>
<dbReference type="KEGG" id="hac:Hac_1036"/>
<dbReference type="eggNOG" id="COG0752">
    <property type="taxonomic scope" value="Bacteria"/>
</dbReference>
<dbReference type="HOGENOM" id="CLU_057066_1_0_7"/>
<dbReference type="OrthoDB" id="9802183at2"/>
<dbReference type="BioCyc" id="HACI382638:HAC_RS04445-MONOMER"/>
<dbReference type="Proteomes" id="UP000000775">
    <property type="component" value="Chromosome"/>
</dbReference>
<dbReference type="GO" id="GO:0005829">
    <property type="term" value="C:cytosol"/>
    <property type="evidence" value="ECO:0007669"/>
    <property type="project" value="TreeGrafter"/>
</dbReference>
<dbReference type="GO" id="GO:0005524">
    <property type="term" value="F:ATP binding"/>
    <property type="evidence" value="ECO:0007669"/>
    <property type="project" value="UniProtKB-UniRule"/>
</dbReference>
<dbReference type="GO" id="GO:0004820">
    <property type="term" value="F:glycine-tRNA ligase activity"/>
    <property type="evidence" value="ECO:0007669"/>
    <property type="project" value="UniProtKB-UniRule"/>
</dbReference>
<dbReference type="GO" id="GO:0006426">
    <property type="term" value="P:glycyl-tRNA aminoacylation"/>
    <property type="evidence" value="ECO:0007669"/>
    <property type="project" value="UniProtKB-UniRule"/>
</dbReference>
<dbReference type="CDD" id="cd00733">
    <property type="entry name" value="GlyRS_alpha_core"/>
    <property type="match status" value="1"/>
</dbReference>
<dbReference type="FunFam" id="3.30.930.10:FF:000006">
    <property type="entry name" value="Glycine--tRNA ligase alpha subunit"/>
    <property type="match status" value="1"/>
</dbReference>
<dbReference type="Gene3D" id="3.30.930.10">
    <property type="entry name" value="Bira Bifunctional Protein, Domain 2"/>
    <property type="match status" value="1"/>
</dbReference>
<dbReference type="Gene3D" id="1.20.58.180">
    <property type="entry name" value="Class II aaRS and biotin synthetases, domain 2"/>
    <property type="match status" value="1"/>
</dbReference>
<dbReference type="HAMAP" id="MF_00254">
    <property type="entry name" value="Gly_tRNA_synth_alpha"/>
    <property type="match status" value="1"/>
</dbReference>
<dbReference type="InterPro" id="IPR045864">
    <property type="entry name" value="aa-tRNA-synth_II/BPL/LPL"/>
</dbReference>
<dbReference type="InterPro" id="IPR006194">
    <property type="entry name" value="Gly-tRNA-synth_heterodimer"/>
</dbReference>
<dbReference type="InterPro" id="IPR002310">
    <property type="entry name" value="Gly-tRNA_ligase_asu"/>
</dbReference>
<dbReference type="NCBIfam" id="TIGR00388">
    <property type="entry name" value="glyQ"/>
    <property type="match status" value="1"/>
</dbReference>
<dbReference type="NCBIfam" id="NF006827">
    <property type="entry name" value="PRK09348.1"/>
    <property type="match status" value="1"/>
</dbReference>
<dbReference type="PANTHER" id="PTHR30075:SF2">
    <property type="entry name" value="GLYCINE--TRNA LIGASE, CHLOROPLASTIC_MITOCHONDRIAL 2"/>
    <property type="match status" value="1"/>
</dbReference>
<dbReference type="PANTHER" id="PTHR30075">
    <property type="entry name" value="GLYCYL-TRNA SYNTHETASE"/>
    <property type="match status" value="1"/>
</dbReference>
<dbReference type="Pfam" id="PF02091">
    <property type="entry name" value="tRNA-synt_2e"/>
    <property type="match status" value="1"/>
</dbReference>
<dbReference type="PRINTS" id="PR01044">
    <property type="entry name" value="TRNASYNTHGA"/>
</dbReference>
<dbReference type="SUPFAM" id="SSF55681">
    <property type="entry name" value="Class II aaRS and biotin synthetases"/>
    <property type="match status" value="1"/>
</dbReference>
<dbReference type="PROSITE" id="PS50861">
    <property type="entry name" value="AA_TRNA_LIGASE_II_GLYAB"/>
    <property type="match status" value="1"/>
</dbReference>
<sequence length="298" mass="34475">MQDFSSLLLKLQEYWKNQGCLVIQPYDIPAGAGTFHPATLLRSLDKKPWNVAYVAPSRRPTDGRYGENPNRLGSYYQFQVVIKPSPSNIQELYLKSLEVLGINLNEHDIRFVEDNWESPTLGAWGLGWEVWLDGMEVTQFTYFQQVGGISCNPIPVEITYGLERLAMYVQKVENILEIEWAKKDNESVRYAQVHLESEYEFSKYHFEVASVKRLLEMFKNAQTEALHCLENKLPLPAYDWVVLCSHFFNILDARKAISVAERQNYILQIRDLAKGCAILYKGQEEEREERLKNALSKA</sequence>
<feature type="chain" id="PRO_1000047430" description="Glycine--tRNA ligase alpha subunit">
    <location>
        <begin position="1"/>
        <end position="298"/>
    </location>
</feature>
<comment type="catalytic activity">
    <reaction evidence="1">
        <text>tRNA(Gly) + glycine + ATP = glycyl-tRNA(Gly) + AMP + diphosphate</text>
        <dbReference type="Rhea" id="RHEA:16013"/>
        <dbReference type="Rhea" id="RHEA-COMP:9664"/>
        <dbReference type="Rhea" id="RHEA-COMP:9683"/>
        <dbReference type="ChEBI" id="CHEBI:30616"/>
        <dbReference type="ChEBI" id="CHEBI:33019"/>
        <dbReference type="ChEBI" id="CHEBI:57305"/>
        <dbReference type="ChEBI" id="CHEBI:78442"/>
        <dbReference type="ChEBI" id="CHEBI:78522"/>
        <dbReference type="ChEBI" id="CHEBI:456215"/>
        <dbReference type="EC" id="6.1.1.14"/>
    </reaction>
</comment>
<comment type="subunit">
    <text evidence="1">Tetramer of two alpha and two beta subunits.</text>
</comment>
<comment type="subcellular location">
    <subcellularLocation>
        <location evidence="1">Cytoplasm</location>
    </subcellularLocation>
</comment>
<comment type="similarity">
    <text evidence="1">Belongs to the class-II aminoacyl-tRNA synthetase family.</text>
</comment>
<accession>Q17X26</accession>
<name>SYGA_HELAH</name>
<protein>
    <recommendedName>
        <fullName evidence="1">Glycine--tRNA ligase alpha subunit</fullName>
        <ecNumber evidence="1">6.1.1.14</ecNumber>
    </recommendedName>
    <alternativeName>
        <fullName evidence="1">Glycyl-tRNA synthetase alpha subunit</fullName>
        <shortName evidence="1">GlyRS</shortName>
    </alternativeName>
</protein>